<feature type="signal peptide">
    <location>
        <begin position="1"/>
        <end position="20"/>
    </location>
</feature>
<feature type="chain" id="PRO_0000010909" description="Interleukin-7 receptor subunit alpha">
    <location>
        <begin position="21"/>
        <end position="459"/>
    </location>
</feature>
<feature type="topological domain" description="Extracellular" evidence="1">
    <location>
        <begin position="21"/>
        <end position="239"/>
    </location>
</feature>
<feature type="transmembrane region" description="Helical" evidence="1">
    <location>
        <begin position="240"/>
        <end position="264"/>
    </location>
</feature>
<feature type="topological domain" description="Cytoplasmic" evidence="1">
    <location>
        <begin position="265"/>
        <end position="459"/>
    </location>
</feature>
<feature type="domain" description="Fibronectin type-III" evidence="2">
    <location>
        <begin position="131"/>
        <end position="231"/>
    </location>
</feature>
<feature type="short sequence motif" description="WSXWS motif">
    <location>
        <begin position="217"/>
        <end position="221"/>
    </location>
</feature>
<feature type="short sequence motif" description="Box 1 motif">
    <location>
        <begin position="272"/>
        <end position="280"/>
    </location>
</feature>
<feature type="modified residue" description="Phosphothreonine; by PKC" evidence="1">
    <location>
        <position position="282"/>
    </location>
</feature>
<feature type="glycosylation site" description="N-linked (GlcNAc...) asparagine" evidence="7">
    <location>
        <position position="49"/>
    </location>
</feature>
<feature type="glycosylation site" description="N-linked (GlcNAc...) asparagine" evidence="7">
    <location>
        <position position="65"/>
    </location>
</feature>
<feature type="glycosylation site" description="N-linked (GlcNAc...) asparagine" evidence="7">
    <location>
        <position position="151"/>
    </location>
</feature>
<feature type="glycosylation site" description="N-linked (GlcNAc...) asparagine" evidence="1">
    <location>
        <position position="182"/>
    </location>
</feature>
<feature type="glycosylation site" description="N-linked (GlcNAc...) asparagine" evidence="1">
    <location>
        <position position="232"/>
    </location>
</feature>
<feature type="glycosylation site" description="N-linked (GlcNAc...) asparagine" evidence="1">
    <location>
        <position position="233"/>
    </location>
</feature>
<feature type="disulfide bond" evidence="7">
    <location>
        <begin position="42"/>
        <end position="57"/>
    </location>
</feature>
<feature type="disulfide bond" evidence="7">
    <location>
        <begin position="74"/>
        <end position="82"/>
    </location>
</feature>
<feature type="disulfide bond" evidence="7">
    <location>
        <begin position="108"/>
        <end position="118"/>
    </location>
</feature>
<feature type="splice variant" id="VSP_001713" description="In isoform 4." evidence="14">
    <original>EMDPILLTISILSFFSVALLVILACVLWKKRIKPIVWPSLPDHKKTLEHLCKKPRKNLNVSFNPESFLDCQIHRVDDIQARDEVEGFLQDTFPQQLEESEKQRLGGDVQSPNCPSEDVVITPESFGRDSSLTCLAGNVSACDAPILSSSRSLDCRESGKNGPHVYQDLLLSLGTTNSTLPPPFSLQSGILTLNPVAQGQPILTSLGSNQEEAYVTMSSFYQNQ</original>
    <variation>LSLSYGPVSPIIRRLWNIFVRNQEK</variation>
    <location>
        <begin position="237"/>
        <end position="459"/>
    </location>
</feature>
<feature type="splice variant" id="VSP_012618" description="In isoform 2." evidence="15">
    <original>EMDPILLTISILSFFS</original>
    <variation>LSLSYGPVSPIIRQEL</variation>
    <location>
        <begin position="237"/>
        <end position="252"/>
    </location>
</feature>
<feature type="splice variant" id="VSP_012619" description="In isoform 2." evidence="15">
    <location>
        <begin position="253"/>
        <end position="459"/>
    </location>
</feature>
<feature type="splice variant" id="VSP_001714" description="In isoform 3." evidence="16">
    <original>NLNVSFNPESFLDCQIHRVDDIQARDEVEGFLQDTFPQQLEESEKQRLGGDVQSPNCPSEDVVITPESFGRDSSLTCLAGNVSACDAPILSSSRSLDCRESGKNGPHVYQDLLLSLGTTNSTLPPPFSLQSGILTLNPVAQGQPILTSLGSNQEEAYVTMSSFYQNQ</original>
    <variation>VSVFGA</variation>
    <location>
        <begin position="293"/>
        <end position="459"/>
    </location>
</feature>
<feature type="sequence variant" id="VAR_021286" description="In dbSNP:rs1494558." evidence="4 5 9 12 13">
    <original>I</original>
    <variation>T</variation>
    <location>
        <position position="66"/>
    </location>
</feature>
<feature type="sequence variant" id="VAR_021287" description="In dbSNP:rs11567735." evidence="13">
    <original>E</original>
    <variation>D</variation>
    <location>
        <position position="113"/>
    </location>
</feature>
<feature type="sequence variant" id="VAR_034870" description="In IMD104; dbSNP:rs104893894." evidence="3">
    <original>P</original>
    <variation>S</variation>
    <location>
        <position position="132"/>
    </location>
</feature>
<feature type="sequence variant" id="VAR_021288" description="In dbSNP:rs1494555." evidence="4 5 9 12 13">
    <original>V</original>
    <variation>I</variation>
    <location>
        <position position="138"/>
    </location>
</feature>
<feature type="sequence variant" id="VAR_021289" description="In dbSNP:rs6897932." evidence="6 12 13">
    <original>T</original>
    <variation>I</variation>
    <location>
        <position position="244"/>
    </location>
</feature>
<feature type="sequence variant" id="VAR_021290" description="In dbSNP:rs3194051." evidence="4 5 8 9">
    <original>I</original>
    <variation>V</variation>
    <location>
        <position position="356"/>
    </location>
</feature>
<feature type="sequence variant" id="VAR_047742" description="In dbSNP:rs2229232.">
    <original>T</original>
    <variation>M</variation>
    <location>
        <position position="414"/>
    </location>
</feature>
<feature type="sequence conflict" description="In Ref. 7; AAH67539." evidence="16" ref="7">
    <original>S</original>
    <variation>T</variation>
    <location>
        <position position="39"/>
    </location>
</feature>
<feature type="sequence conflict" description="In Ref. 7; AAH67538." evidence="16" ref="7">
    <original>Q</original>
    <variation>R</variation>
    <location>
        <position position="52"/>
    </location>
</feature>
<feature type="sequence conflict" description="In Ref. 7; AAH67537." evidence="16" ref="7">
    <original>S</original>
    <variation>P</variation>
    <location>
        <position position="384"/>
    </location>
</feature>
<feature type="sequence conflict" description="In Ref. 7; AAH67539." evidence="16" ref="7">
    <original>R</original>
    <variation>G</variation>
    <location>
        <position position="386"/>
    </location>
</feature>
<feature type="helix" evidence="18">
    <location>
        <begin position="35"/>
        <end position="38"/>
    </location>
</feature>
<feature type="strand" evidence="20">
    <location>
        <begin position="40"/>
        <end position="49"/>
    </location>
</feature>
<feature type="strand" evidence="20">
    <location>
        <begin position="52"/>
        <end position="61"/>
    </location>
</feature>
<feature type="strand" evidence="20">
    <location>
        <begin position="70"/>
        <end position="79"/>
    </location>
</feature>
<feature type="strand" evidence="20">
    <location>
        <begin position="81"/>
        <end position="84"/>
    </location>
</feature>
<feature type="strand" evidence="20">
    <location>
        <begin position="86"/>
        <end position="88"/>
    </location>
</feature>
<feature type="strand" evidence="20">
    <location>
        <begin position="91"/>
        <end position="97"/>
    </location>
</feature>
<feature type="strand" evidence="19">
    <location>
        <begin position="101"/>
        <end position="103"/>
    </location>
</feature>
<feature type="strand" evidence="20">
    <location>
        <begin position="105"/>
        <end position="111"/>
    </location>
</feature>
<feature type="strand" evidence="20">
    <location>
        <begin position="114"/>
        <end position="121"/>
    </location>
</feature>
<feature type="helix" evidence="20">
    <location>
        <begin position="123"/>
        <end position="125"/>
    </location>
</feature>
<feature type="strand" evidence="20">
    <location>
        <begin position="133"/>
        <end position="140"/>
    </location>
</feature>
<feature type="turn" evidence="20">
    <location>
        <begin position="141"/>
        <end position="144"/>
    </location>
</feature>
<feature type="strand" evidence="20">
    <location>
        <begin position="145"/>
        <end position="151"/>
    </location>
</feature>
<feature type="helix" evidence="20">
    <location>
        <begin position="153"/>
        <end position="156"/>
    </location>
</feature>
<feature type="strand" evidence="20">
    <location>
        <begin position="158"/>
        <end position="160"/>
    </location>
</feature>
<feature type="strand" evidence="20">
    <location>
        <begin position="163"/>
        <end position="171"/>
    </location>
</feature>
<feature type="strand" evidence="20">
    <location>
        <begin position="179"/>
        <end position="191"/>
    </location>
</feature>
<feature type="helix" evidence="20">
    <location>
        <begin position="192"/>
        <end position="194"/>
    </location>
</feature>
<feature type="strand" evidence="20">
    <location>
        <begin position="200"/>
        <end position="209"/>
    </location>
</feature>
<feature type="strand" evidence="17">
    <location>
        <begin position="211"/>
        <end position="213"/>
    </location>
</feature>
<feature type="strand" evidence="20">
    <location>
        <begin position="224"/>
        <end position="227"/>
    </location>
</feature>
<accession>P16871</accession>
<accession>B2RCS6</accession>
<accession>B4DVT1</accession>
<accession>Q05CU8</accession>
<accession>Q6NSP4</accession>
<accession>Q6NWM0</accession>
<accession>Q6NWM1</accession>
<accession>Q6NWM2</accession>
<accession>Q6NWM3</accession>
<accession>Q6SV45</accession>
<accession>Q9UPC1</accession>
<keyword id="KW-0002">3D-structure</keyword>
<keyword id="KW-0025">Alternative splicing</keyword>
<keyword id="KW-1003">Cell membrane</keyword>
<keyword id="KW-0225">Disease variant</keyword>
<keyword id="KW-1015">Disulfide bond</keyword>
<keyword id="KW-0325">Glycoprotein</keyword>
<keyword id="KW-0472">Membrane</keyword>
<keyword id="KW-0597">Phosphoprotein</keyword>
<keyword id="KW-1267">Proteomics identification</keyword>
<keyword id="KW-0675">Receptor</keyword>
<keyword id="KW-1185">Reference proteome</keyword>
<keyword id="KW-0705">SCID</keyword>
<keyword id="KW-0964">Secreted</keyword>
<keyword id="KW-0732">Signal</keyword>
<keyword id="KW-0812">Transmembrane</keyword>
<keyword id="KW-1133">Transmembrane helix</keyword>
<keyword id="KW-0832">Ubl conjugation</keyword>
<name>IL7RA_HUMAN</name>
<protein>
    <recommendedName>
        <fullName>Interleukin-7 receptor subunit alpha</fullName>
        <shortName>IL-7 receptor subunit alpha</shortName>
        <shortName>IL-7R subunit alpha</shortName>
        <shortName>IL-7R-alpha</shortName>
        <shortName>IL-7RA</shortName>
    </recommendedName>
    <alternativeName>
        <fullName>CDw127</fullName>
    </alternativeName>
    <cdAntigenName>CD127</cdAntigenName>
</protein>
<reference key="1">
    <citation type="journal article" date="1990" name="Cell">
        <title>Cloning of the human and murine interleukin-7 receptors: demonstration of a soluble form and homology to a new receptor superfamily.</title>
        <authorList>
            <person name="Goodwin R.G."/>
            <person name="Friend D."/>
            <person name="Ziegler S.F."/>
            <person name="Jerzy R."/>
            <person name="Falk B.A."/>
            <person name="Gimpel S."/>
            <person name="Cosman D."/>
            <person name="Dower S.K."/>
            <person name="March C.J."/>
            <person name="Namen A.E."/>
            <person name="Park L.S."/>
        </authorList>
    </citation>
    <scope>NUCLEOTIDE SEQUENCE [MRNA] (ISOFORM 1)</scope>
    <scope>ALTERNATIVE SPLICING</scope>
    <scope>VARIANTS THR-66; ILE-138 AND VAL-356</scope>
    <source>
        <tissue>B-cell</tissue>
    </source>
</reference>
<reference key="2">
    <citation type="journal article" date="1991" name="Mol. Cell. Biol.">
        <title>Organization of the murine and human interleukin-7 receptor genes: two mRNAs generated by differential splicing and presence of a type I-interferon-inducible promoter.</title>
        <authorList>
            <person name="Pleiman C.M."/>
            <person name="Gimpel S.D."/>
            <person name="Park L.S."/>
            <person name="Harada H."/>
            <person name="Taniguchi T."/>
            <person name="Ziegler S.F."/>
        </authorList>
    </citation>
    <scope>NUCLEOTIDE SEQUENCE [MRNA] (ISOFORMS 1 AND 2)</scope>
</reference>
<reference key="3">
    <citation type="journal article" date="1998" name="Nat. Genet.">
        <title>Defective IL7R expression in T(-)B(+)NK(+) severe combined immunodeficiency.</title>
        <authorList>
            <person name="Puel A."/>
            <person name="Ziegler S.F."/>
            <person name="Buckley R.H."/>
            <person name="Leonard W.J."/>
        </authorList>
    </citation>
    <scope>NUCLEOTIDE SEQUENCE [GENOMIC DNA] (ISOFORM 1)</scope>
    <scope>INVOLVEMENT IN IMD104</scope>
    <scope>VARIANTS THR-66; ILE-138 AND ILE-244</scope>
</reference>
<reference key="4">
    <citation type="journal article" date="2004" name="Nat. Genet.">
        <title>Complete sequencing and characterization of 21,243 full-length human cDNAs.</title>
        <authorList>
            <person name="Ota T."/>
            <person name="Suzuki Y."/>
            <person name="Nishikawa T."/>
            <person name="Otsuki T."/>
            <person name="Sugiyama T."/>
            <person name="Irie R."/>
            <person name="Wakamatsu A."/>
            <person name="Hayashi K."/>
            <person name="Sato H."/>
            <person name="Nagai K."/>
            <person name="Kimura K."/>
            <person name="Makita H."/>
            <person name="Sekine M."/>
            <person name="Obayashi M."/>
            <person name="Nishi T."/>
            <person name="Shibahara T."/>
            <person name="Tanaka T."/>
            <person name="Ishii S."/>
            <person name="Yamamoto J."/>
            <person name="Saito K."/>
            <person name="Kawai Y."/>
            <person name="Isono Y."/>
            <person name="Nakamura Y."/>
            <person name="Nagahari K."/>
            <person name="Murakami K."/>
            <person name="Yasuda T."/>
            <person name="Iwayanagi T."/>
            <person name="Wagatsuma M."/>
            <person name="Shiratori A."/>
            <person name="Sudo H."/>
            <person name="Hosoiri T."/>
            <person name="Kaku Y."/>
            <person name="Kodaira H."/>
            <person name="Kondo H."/>
            <person name="Sugawara M."/>
            <person name="Takahashi M."/>
            <person name="Kanda K."/>
            <person name="Yokoi T."/>
            <person name="Furuya T."/>
            <person name="Kikkawa E."/>
            <person name="Omura Y."/>
            <person name="Abe K."/>
            <person name="Kamihara K."/>
            <person name="Katsuta N."/>
            <person name="Sato K."/>
            <person name="Tanikawa M."/>
            <person name="Yamazaki M."/>
            <person name="Ninomiya K."/>
            <person name="Ishibashi T."/>
            <person name="Yamashita H."/>
            <person name="Murakawa K."/>
            <person name="Fujimori K."/>
            <person name="Tanai H."/>
            <person name="Kimata M."/>
            <person name="Watanabe M."/>
            <person name="Hiraoka S."/>
            <person name="Chiba Y."/>
            <person name="Ishida S."/>
            <person name="Ono Y."/>
            <person name="Takiguchi S."/>
            <person name="Watanabe S."/>
            <person name="Yosida M."/>
            <person name="Hotuta T."/>
            <person name="Kusano J."/>
            <person name="Kanehori K."/>
            <person name="Takahashi-Fujii A."/>
            <person name="Hara H."/>
            <person name="Tanase T.-O."/>
            <person name="Nomura Y."/>
            <person name="Togiya S."/>
            <person name="Komai F."/>
            <person name="Hara R."/>
            <person name="Takeuchi K."/>
            <person name="Arita M."/>
            <person name="Imose N."/>
            <person name="Musashino K."/>
            <person name="Yuuki H."/>
            <person name="Oshima A."/>
            <person name="Sasaki N."/>
            <person name="Aotsuka S."/>
            <person name="Yoshikawa Y."/>
            <person name="Matsunawa H."/>
            <person name="Ichihara T."/>
            <person name="Shiohata N."/>
            <person name="Sano S."/>
            <person name="Moriya S."/>
            <person name="Momiyama H."/>
            <person name="Satoh N."/>
            <person name="Takami S."/>
            <person name="Terashima Y."/>
            <person name="Suzuki O."/>
            <person name="Nakagawa S."/>
            <person name="Senoh A."/>
            <person name="Mizoguchi H."/>
            <person name="Goto Y."/>
            <person name="Shimizu F."/>
            <person name="Wakebe H."/>
            <person name="Hishigaki H."/>
            <person name="Watanabe T."/>
            <person name="Sugiyama A."/>
            <person name="Takemoto M."/>
            <person name="Kawakami B."/>
            <person name="Yamazaki M."/>
            <person name="Watanabe K."/>
            <person name="Kumagai A."/>
            <person name="Itakura S."/>
            <person name="Fukuzumi Y."/>
            <person name="Fujimori Y."/>
            <person name="Komiyama M."/>
            <person name="Tashiro H."/>
            <person name="Tanigami A."/>
            <person name="Fujiwara T."/>
            <person name="Ono T."/>
            <person name="Yamada K."/>
            <person name="Fujii Y."/>
            <person name="Ozaki K."/>
            <person name="Hirao M."/>
            <person name="Ohmori Y."/>
            <person name="Kawabata A."/>
            <person name="Hikiji T."/>
            <person name="Kobatake N."/>
            <person name="Inagaki H."/>
            <person name="Ikema Y."/>
            <person name="Okamoto S."/>
            <person name="Okitani R."/>
            <person name="Kawakami T."/>
            <person name="Noguchi S."/>
            <person name="Itoh T."/>
            <person name="Shigeta K."/>
            <person name="Senba T."/>
            <person name="Matsumura K."/>
            <person name="Nakajima Y."/>
            <person name="Mizuno T."/>
            <person name="Morinaga M."/>
            <person name="Sasaki M."/>
            <person name="Togashi T."/>
            <person name="Oyama M."/>
            <person name="Hata H."/>
            <person name="Watanabe M."/>
            <person name="Komatsu T."/>
            <person name="Mizushima-Sugano J."/>
            <person name="Satoh T."/>
            <person name="Shirai Y."/>
            <person name="Takahashi Y."/>
            <person name="Nakagawa K."/>
            <person name="Okumura K."/>
            <person name="Nagase T."/>
            <person name="Nomura N."/>
            <person name="Kikuchi H."/>
            <person name="Masuho Y."/>
            <person name="Yamashita R."/>
            <person name="Nakai K."/>
            <person name="Yada T."/>
            <person name="Nakamura Y."/>
            <person name="Ohara O."/>
            <person name="Isogai T."/>
            <person name="Sugano S."/>
        </authorList>
    </citation>
    <scope>NUCLEOTIDE SEQUENCE [LARGE SCALE MRNA] (ISOFORMS 1 AND 4)</scope>
    <scope>VARIANTS THR-66; ILE-138 AND VAL-356</scope>
    <source>
        <tissue>Spleen</tissue>
    </source>
</reference>
<reference key="5">
    <citation type="submission" date="2003-10" db="EMBL/GenBank/DDBJ databases">
        <authorList>
            <consortium name="SeattleSNPs variation discovery resource"/>
        </authorList>
    </citation>
    <scope>NUCLEOTIDE SEQUENCE [GENOMIC DNA] (ISOFORM 1)</scope>
    <scope>VARIANTS THR-66; ASP-113; ILE-138 AND ILE-244</scope>
</reference>
<reference key="6">
    <citation type="journal article" date="2004" name="Nature">
        <title>The DNA sequence and comparative analysis of human chromosome 5.</title>
        <authorList>
            <person name="Schmutz J."/>
            <person name="Martin J."/>
            <person name="Terry A."/>
            <person name="Couronne O."/>
            <person name="Grimwood J."/>
            <person name="Lowry S."/>
            <person name="Gordon L.A."/>
            <person name="Scott D."/>
            <person name="Xie G."/>
            <person name="Huang W."/>
            <person name="Hellsten U."/>
            <person name="Tran-Gyamfi M."/>
            <person name="She X."/>
            <person name="Prabhakar S."/>
            <person name="Aerts A."/>
            <person name="Altherr M."/>
            <person name="Bajorek E."/>
            <person name="Black S."/>
            <person name="Branscomb E."/>
            <person name="Caoile C."/>
            <person name="Challacombe J.F."/>
            <person name="Chan Y.M."/>
            <person name="Denys M."/>
            <person name="Detter J.C."/>
            <person name="Escobar J."/>
            <person name="Flowers D."/>
            <person name="Fotopulos D."/>
            <person name="Glavina T."/>
            <person name="Gomez M."/>
            <person name="Gonzales E."/>
            <person name="Goodstein D."/>
            <person name="Grigoriev I."/>
            <person name="Groza M."/>
            <person name="Hammon N."/>
            <person name="Hawkins T."/>
            <person name="Haydu L."/>
            <person name="Israni S."/>
            <person name="Jett J."/>
            <person name="Kadner K."/>
            <person name="Kimball H."/>
            <person name="Kobayashi A."/>
            <person name="Lopez F."/>
            <person name="Lou Y."/>
            <person name="Martinez D."/>
            <person name="Medina C."/>
            <person name="Morgan J."/>
            <person name="Nandkeshwar R."/>
            <person name="Noonan J.P."/>
            <person name="Pitluck S."/>
            <person name="Pollard M."/>
            <person name="Predki P."/>
            <person name="Priest J."/>
            <person name="Ramirez L."/>
            <person name="Retterer J."/>
            <person name="Rodriguez A."/>
            <person name="Rogers S."/>
            <person name="Salamov A."/>
            <person name="Salazar A."/>
            <person name="Thayer N."/>
            <person name="Tice H."/>
            <person name="Tsai M."/>
            <person name="Ustaszewska A."/>
            <person name="Vo N."/>
            <person name="Wheeler J."/>
            <person name="Wu K."/>
            <person name="Yang J."/>
            <person name="Dickson M."/>
            <person name="Cheng J.-F."/>
            <person name="Eichler E.E."/>
            <person name="Olsen A."/>
            <person name="Pennacchio L.A."/>
            <person name="Rokhsar D.S."/>
            <person name="Richardson P."/>
            <person name="Lucas S.M."/>
            <person name="Myers R.M."/>
            <person name="Rubin E.M."/>
        </authorList>
    </citation>
    <scope>NUCLEOTIDE SEQUENCE [LARGE SCALE GENOMIC DNA]</scope>
</reference>
<reference key="7">
    <citation type="journal article" date="2004" name="Genome Res.">
        <title>The status, quality, and expansion of the NIH full-length cDNA project: the Mammalian Gene Collection (MGC).</title>
        <authorList>
            <consortium name="The MGC Project Team"/>
        </authorList>
    </citation>
    <scope>NUCLEOTIDE SEQUENCE [LARGE SCALE MRNA] (ISOFORM 1)</scope>
    <scope>VARIANTS THR-66; ILE-138 AND VAL-356</scope>
    <source>
        <tissue>Testis</tissue>
    </source>
</reference>
<reference key="8">
    <citation type="journal article" date="2020" name="J. Immunol.">
        <title>The Tetraspanin CD53 Regulates Early B Cell Development by Promoting IL-7R Signaling.</title>
        <authorList>
            <person name="Greenberg Z.J."/>
            <person name="Monlish D.A."/>
            <person name="Bartnett R.L."/>
            <person name="Yang Y."/>
            <person name="Shen G."/>
            <person name="Li W."/>
            <person name="Bednarski J.J."/>
            <person name="Schuettpelz L.G."/>
        </authorList>
    </citation>
    <scope>SUBCELLULAR LOCATION</scope>
    <scope>INTERACTION WITH CD53</scope>
</reference>
<reference key="9">
    <citation type="journal article" date="2024" name="J. Immunol.">
        <title>MARCH8 Mediates K27-Linked Polyubiquitination of IL-7 Receptor alpha to Negatively Regulate IL-7-Triggered T Cell Homeostasis.</title>
        <authorList>
            <person name="Gao D."/>
            <person name="Yi X.M."/>
            <person name="Feng L."/>
            <person name="Li S."/>
            <person name="Shu H.B."/>
        </authorList>
    </citation>
    <scope>UBIQUITINATION BY MARCHF8</scope>
</reference>
<reference key="10">
    <citation type="journal article" date="2009" name="Structure">
        <title>Structural and biophysical studies of the human IL-7/IL-7Ralpha complex.</title>
        <authorList>
            <person name="McElroy C.A."/>
            <person name="Dohm J.A."/>
            <person name="Walsh S.T."/>
        </authorList>
    </citation>
    <scope>X-RAY CRYSTALLOGRAPHY (2.7 ANGSTROMS) OF 21-239 IN COMPLEX WITH IL7</scope>
    <scope>SUBUNIT</scope>
    <scope>GLYCOSYLATION AT ASN-49; ASN-65 AND ASN-151</scope>
    <scope>DISULFIDE BONDS</scope>
</reference>
<reference key="11">
    <citation type="journal article" date="2000" name="Blood">
        <title>A partial deficiency of interleukin-7R alpha is sufficient to abrogate T-cell development and cause severe combined immunodeficiency.</title>
        <authorList>
            <person name="Roifman C.M."/>
            <person name="Zhang J."/>
            <person name="Chitayat D."/>
            <person name="Sharfe N."/>
        </authorList>
    </citation>
    <scope>INVOLVEMENT IN IMD104</scope>
    <scope>VARIANT IMD104 SER-132</scope>
</reference>
<reference key="12">
    <citation type="journal article" date="2007" name="Nat. Genet.">
        <title>Interleukin 7 receptor alpha chain (IL7R) shows allelic and functional association with multiple sclerosis.</title>
        <authorList>
            <person name="Gregory S.G."/>
            <person name="Schmidt S."/>
            <person name="Seth P."/>
            <person name="Oksenberg J.R."/>
            <person name="Hart J."/>
            <person name="Prokop A."/>
            <person name="Caillier S.J."/>
            <person name="Ban M."/>
            <person name="Goris A."/>
            <person name="Barcellos L.F."/>
            <person name="Lincoln R."/>
            <person name="McCauley J.L."/>
            <person name="Sawcer S.J."/>
            <person name="Compston D.A."/>
            <person name="Dubois B."/>
            <person name="Hauser S.L."/>
            <person name="Garcia-Blanco M.A."/>
            <person name="Pericak-Vance M.A."/>
            <person name="Haines J.L."/>
        </authorList>
    </citation>
    <scope>VARIANT ILE-244</scope>
    <scope>ASSOCIATION WITH MS3</scope>
</reference>
<gene>
    <name type="primary">IL7R</name>
</gene>
<proteinExistence type="evidence at protein level"/>
<evidence type="ECO:0000255" key="1"/>
<evidence type="ECO:0000255" key="2">
    <source>
        <dbReference type="PROSITE-ProRule" id="PRU00316"/>
    </source>
</evidence>
<evidence type="ECO:0000269" key="3">
    <source>
    </source>
</evidence>
<evidence type="ECO:0000269" key="4">
    <source>
    </source>
</evidence>
<evidence type="ECO:0000269" key="5">
    <source>
    </source>
</evidence>
<evidence type="ECO:0000269" key="6">
    <source>
    </source>
</evidence>
<evidence type="ECO:0000269" key="7">
    <source>
    </source>
</evidence>
<evidence type="ECO:0000269" key="8">
    <source>
    </source>
</evidence>
<evidence type="ECO:0000269" key="9">
    <source>
    </source>
</evidence>
<evidence type="ECO:0000269" key="10">
    <source>
    </source>
</evidence>
<evidence type="ECO:0000269" key="11">
    <source>
    </source>
</evidence>
<evidence type="ECO:0000269" key="12">
    <source>
    </source>
</evidence>
<evidence type="ECO:0000269" key="13">
    <source ref="5"/>
</evidence>
<evidence type="ECO:0000303" key="14">
    <source>
    </source>
</evidence>
<evidence type="ECO:0000303" key="15">
    <source>
    </source>
</evidence>
<evidence type="ECO:0000305" key="16"/>
<evidence type="ECO:0007829" key="17">
    <source>
        <dbReference type="PDB" id="3DI3"/>
    </source>
</evidence>
<evidence type="ECO:0007829" key="18">
    <source>
        <dbReference type="PDB" id="3UP1"/>
    </source>
</evidence>
<evidence type="ECO:0007829" key="19">
    <source>
        <dbReference type="PDB" id="6P67"/>
    </source>
</evidence>
<evidence type="ECO:0007829" key="20">
    <source>
        <dbReference type="PDB" id="7OPB"/>
    </source>
</evidence>
<comment type="function">
    <text>Receptor for interleukin-7. Also acts as a receptor for thymic stromal lymphopoietin (TSLP).</text>
</comment>
<comment type="subunit">
    <text evidence="7 10">The IL7 receptor is a heterodimer of IL7R and IL2RG. The TSLP receptor is a heterodimer of CRLF2 and IL7R. Interacts with CD53 (PubMed:31748347).</text>
</comment>
<comment type="interaction">
    <interactant intactId="EBI-80490">
        <id>P16871</id>
    </interactant>
    <interactant intactId="EBI-11522760">
        <id>Q6RW13-2</id>
        <label>AGTRAP</label>
    </interactant>
    <organismsDiffer>false</organismsDiffer>
    <experiments>3</experiments>
</comment>
<comment type="interaction">
    <interactant intactId="EBI-80490">
        <id>P16871</id>
    </interactant>
    <interactant intactId="EBI-11976321">
        <id>O95236-2</id>
        <label>APOL3</label>
    </interactant>
    <organismsDiffer>false</organismsDiffer>
    <experiments>3</experiments>
</comment>
<comment type="interaction">
    <interactant intactId="EBI-80490">
        <id>P16871</id>
    </interactant>
    <interactant intactId="EBI-721179">
        <id>P27449</id>
        <label>ATP6V0C</label>
    </interactant>
    <organismsDiffer>false</organismsDiffer>
    <experiments>3</experiments>
</comment>
<comment type="interaction">
    <interactant intactId="EBI-80490">
        <id>P16871</id>
    </interactant>
    <interactant intactId="EBI-14259393">
        <id>Q8IX05</id>
        <label>CD302</label>
    </interactant>
    <organismsDiffer>false</organismsDiffer>
    <experiments>3</experiments>
</comment>
<comment type="interaction">
    <interactant intactId="EBI-80490">
        <id>P16871</id>
    </interactant>
    <interactant intactId="EBI-2876774">
        <id>Q92520</id>
        <label>FAM3C</label>
    </interactant>
    <organismsDiffer>false</organismsDiffer>
    <experiments>3</experiments>
</comment>
<comment type="interaction">
    <interactant intactId="EBI-80490">
        <id>P16871</id>
    </interactant>
    <interactant intactId="EBI-80516">
        <id>P13232</id>
        <label>IL7</label>
    </interactant>
    <organismsDiffer>false</organismsDiffer>
    <experiments>10</experiments>
</comment>
<comment type="interaction">
    <interactant intactId="EBI-80490">
        <id>P16871</id>
    </interactant>
    <interactant intactId="EBI-750078">
        <id>Q13021</id>
        <label>MALL</label>
    </interactant>
    <organismsDiffer>false</organismsDiffer>
    <experiments>3</experiments>
</comment>
<comment type="interaction">
    <interactant intactId="EBI-80490">
        <id>P16871</id>
    </interactant>
    <interactant intactId="EBI-2808234">
        <id>P11836</id>
        <label>MS4A1</label>
    </interactant>
    <organismsDiffer>false</organismsDiffer>
    <experiments>3</experiments>
</comment>
<comment type="interaction">
    <interactant intactId="EBI-80490">
        <id>P16871</id>
    </interactant>
    <interactant intactId="EBI-3913237">
        <id>P31431</id>
        <label>SDC4</label>
    </interactant>
    <organismsDiffer>false</organismsDiffer>
    <experiments>3</experiments>
</comment>
<comment type="interaction">
    <interactant intactId="EBI-80490">
        <id>P16871</id>
    </interactant>
    <interactant intactId="EBI-10171534">
        <id>A0PK00</id>
        <label>TMEM120B</label>
    </interactant>
    <organismsDiffer>false</organismsDiffer>
    <experiments>3</experiments>
</comment>
<comment type="interaction">
    <interactant intactId="EBI-80490">
        <id>P16871</id>
    </interactant>
    <interactant intactId="EBI-2852148">
        <id>Q9H2L4</id>
        <label>TMEM60</label>
    </interactant>
    <organismsDiffer>false</organismsDiffer>
    <experiments>3</experiments>
</comment>
<comment type="interaction">
    <interactant intactId="EBI-80490">
        <id>P16871</id>
    </interactant>
    <interactant intactId="EBI-10191195">
        <id>O95183</id>
        <label>VAMP5</label>
    </interactant>
    <organismsDiffer>false</organismsDiffer>
    <experiments>3</experiments>
</comment>
<comment type="subcellular location">
    <molecule>Isoform 1</molecule>
    <subcellularLocation>
        <location>Cell membrane</location>
        <topology evidence="10">Single-pass type I membrane protein</topology>
    </subcellularLocation>
</comment>
<comment type="subcellular location">
    <molecule>Isoform 3</molecule>
    <subcellularLocation>
        <location>Cell membrane</location>
        <topology>Single-pass type I membrane protein</topology>
    </subcellularLocation>
</comment>
<comment type="subcellular location">
    <molecule>Isoform 4</molecule>
    <subcellularLocation>
        <location>Secreted</location>
    </subcellularLocation>
</comment>
<comment type="alternative products">
    <event type="alternative splicing"/>
    <isoform>
        <id>P16871-1</id>
        <name>1</name>
        <name>H20</name>
        <sequence type="displayed"/>
    </isoform>
    <isoform>
        <id>P16871-2</id>
        <name>3</name>
        <name>H1</name>
        <sequence type="described" ref="VSP_001714"/>
    </isoform>
    <isoform>
        <id>P16871-3</id>
        <name>4</name>
        <name>H6</name>
        <name>Secreted</name>
        <sequence type="described" ref="VSP_001713"/>
    </isoform>
    <isoform>
        <id>P16871-4</id>
        <name>2</name>
        <name>Secreted</name>
        <sequence type="described" ref="VSP_012618 VSP_012619"/>
    </isoform>
</comment>
<comment type="domain">
    <text>The WSXWS motif appears to be necessary for proper protein folding and thereby efficient intracellular transport and cell-surface receptor binding.</text>
</comment>
<comment type="domain">
    <text>The box 1 motif is required for JAK interaction and/or activation.</text>
</comment>
<comment type="PTM">
    <text evidence="7">N-glycosylated IL-7Ralpha binds IL7 300-fold more tightly than the unglycosylated form.</text>
</comment>
<comment type="PTM">
    <text evidence="11">Ubiquitinated by MARCHF8; leading to lysosomal degradation.</text>
</comment>
<comment type="disease" evidence="3 12">
    <disease id="DI-01018">
        <name>Immunodeficiency 104, severe combined</name>
        <acronym>IMD104</acronym>
        <description>A form of severe combined immunodeficiency (SCID), a genetically and clinically heterogeneous group of rare congenital disorders characterized by impairment of both humoral and cell-mediated immunity, leukopenia, and low or absent antibody levels. Patients present in infancy recurrent, persistent infections by opportunistic organisms. The common characteristic of all types of SCID is absence of T-cell-mediated cellular immunity due to a defect in T-cell development.</description>
        <dbReference type="MIM" id="608971"/>
    </disease>
    <text>The disease is caused by variants affecting the gene represented in this entry.</text>
</comment>
<comment type="disease" evidence="6">
    <disease id="DI-02605">
        <name>Multiple sclerosis 3</name>
        <acronym>MS3</acronym>
        <description>A multifactorial, inflammatory, demyelinating disease of the central nervous system. Sclerotic lesions are characterized by perivascular infiltration of monocytes and lymphocytes and appear as indurated areas in pathologic specimens (sclerosis in plaques). The pathological mechanism is regarded as an autoimmune attack of the myelin sheath, mediated by both cellular and humoral immunity. Clinical manifestations include visual loss, extra-ocular movement disorders, paresthesias, loss of sensation, weakness, dysarthria, spasticity, ataxia and bladder dysfunction. Genetic and environmental factors influence susceptibility to the disease.</description>
        <dbReference type="MIM" id="612595"/>
    </disease>
    <text>Disease susceptibility is associated with variants affecting the gene represented in this entry. A polymorphism at position 244 strongly influences susceptibility to multiple sclerosis. Overtransmission of the major 'C' allele coding for Thr-244 is detected in offspring affected with multiple sclerosis. In vitro analysis of transcripts from minigenes containing either 'C' allele (Thr-244) or 'T' allele (Ile-244) shows that the 'C' allele results in an approximately two-fold increase in the skipping of exon 6, leading to increased production of a soluble form of IL7R. Thus, the multiple sclerosis associated 'C' risk allele of IL7R would probably decrease membrane-bound expression of IL7R. As this risk allele is common in the general population, some additional triggers are probably required for the development and progression of MS.</text>
</comment>
<comment type="similarity">
    <text evidence="16">Belongs to the type I cytokine receptor family. Type 4 subfamily.</text>
</comment>
<comment type="sequence caution" evidence="16">
    <conflict type="miscellaneous discrepancy">
        <sequence resource="EMBL-CDS" id="AAH20717"/>
    </conflict>
    <text>Contaminating sequence. Potential poly-A sequence.</text>
</comment>
<comment type="online information" name="IL7Rbase">
    <link uri="https://databases.lovd.nl/shared/genes/IL7R"/>
    <text>IL7R mutation db</text>
</comment>
<sequence length="459" mass="51579">MTILGTTFGMVFSLLQVVSGESGYAQNGDLEDAELDDYSFSCYSQLEVNGSQHSLTCAFEDPDVNITNLEFEICGALVEVKCLNFRKLQEIYFIETKKFLLIGKSNICVKVGEKSLTCKKIDLTTIVKPEAPFDLSVVYREGANDFVVTFNTSHLQKKYVKVLMHDVAYRQEKDENKWTHVNLSSTKLTLLQRKLQPAAMYEIKVRSIPDHYFKGFWSEWSPSYYFRTPEINNSSGEMDPILLTISILSFFSVALLVILACVLWKKRIKPIVWPSLPDHKKTLEHLCKKPRKNLNVSFNPESFLDCQIHRVDDIQARDEVEGFLQDTFPQQLEESEKQRLGGDVQSPNCPSEDVVITPESFGRDSSLTCLAGNVSACDAPILSSSRSLDCRESGKNGPHVYQDLLLSLGTTNSTLPPPFSLQSGILTLNPVAQGQPILTSLGSNQEEAYVTMSSFYQNQ</sequence>
<dbReference type="EMBL" id="M29696">
    <property type="protein sequence ID" value="AAA59157.1"/>
    <property type="molecule type" value="mRNA"/>
</dbReference>
<dbReference type="EMBL" id="AF043129">
    <property type="protein sequence ID" value="AAC83204.1"/>
    <property type="molecule type" value="Genomic_DNA"/>
</dbReference>
<dbReference type="EMBL" id="AF043123">
    <property type="protein sequence ID" value="AAC83204.1"/>
    <property type="status" value="JOINED"/>
    <property type="molecule type" value="Genomic_DNA"/>
</dbReference>
<dbReference type="EMBL" id="AF043124">
    <property type="protein sequence ID" value="AAC83204.1"/>
    <property type="status" value="JOINED"/>
    <property type="molecule type" value="Genomic_DNA"/>
</dbReference>
<dbReference type="EMBL" id="AF043125">
    <property type="protein sequence ID" value="AAC83204.1"/>
    <property type="status" value="JOINED"/>
    <property type="molecule type" value="Genomic_DNA"/>
</dbReference>
<dbReference type="EMBL" id="AF043126">
    <property type="protein sequence ID" value="AAC83204.1"/>
    <property type="status" value="JOINED"/>
    <property type="molecule type" value="Genomic_DNA"/>
</dbReference>
<dbReference type="EMBL" id="AF043127">
    <property type="protein sequence ID" value="AAC83204.1"/>
    <property type="status" value="JOINED"/>
    <property type="molecule type" value="Genomic_DNA"/>
</dbReference>
<dbReference type="EMBL" id="AF043128">
    <property type="protein sequence ID" value="AAC83204.1"/>
    <property type="status" value="JOINED"/>
    <property type="molecule type" value="Genomic_DNA"/>
</dbReference>
<dbReference type="EMBL" id="AK301220">
    <property type="protein sequence ID" value="BAG62793.1"/>
    <property type="molecule type" value="mRNA"/>
</dbReference>
<dbReference type="EMBL" id="AK315251">
    <property type="protein sequence ID" value="BAG37673.1"/>
    <property type="molecule type" value="mRNA"/>
</dbReference>
<dbReference type="EMBL" id="AY449709">
    <property type="protein sequence ID" value="AAR08908.1"/>
    <property type="molecule type" value="Genomic_DNA"/>
</dbReference>
<dbReference type="EMBL" id="AC112204">
    <property type="status" value="NOT_ANNOTATED_CDS"/>
    <property type="molecule type" value="Genomic_DNA"/>
</dbReference>
<dbReference type="EMBL" id="BC020717">
    <property type="protein sequence ID" value="AAH20717.1"/>
    <property type="status" value="ALT_SEQ"/>
    <property type="molecule type" value="mRNA"/>
</dbReference>
<dbReference type="EMBL" id="BC067537">
    <property type="protein sequence ID" value="AAH67537.1"/>
    <property type="molecule type" value="mRNA"/>
</dbReference>
<dbReference type="EMBL" id="BC067538">
    <property type="protein sequence ID" value="AAH67538.1"/>
    <property type="molecule type" value="mRNA"/>
</dbReference>
<dbReference type="EMBL" id="BC067539">
    <property type="protein sequence ID" value="AAH67539.1"/>
    <property type="molecule type" value="mRNA"/>
</dbReference>
<dbReference type="EMBL" id="BC067540">
    <property type="protein sequence ID" value="AAH67540.1"/>
    <property type="molecule type" value="mRNA"/>
</dbReference>
<dbReference type="EMBL" id="BC069999">
    <property type="protein sequence ID" value="AAH69999.1"/>
    <property type="molecule type" value="mRNA"/>
</dbReference>
<dbReference type="CCDS" id="CCDS3911.1">
    <molecule id="P16871-1"/>
</dbReference>
<dbReference type="PIR" id="A34791">
    <property type="entry name" value="A34791"/>
</dbReference>
<dbReference type="PIR" id="B34791">
    <property type="entry name" value="B34791"/>
</dbReference>
<dbReference type="PIR" id="C34791">
    <property type="entry name" value="C34791"/>
</dbReference>
<dbReference type="RefSeq" id="NP_002176.2">
    <molecule id="P16871-1"/>
    <property type="nucleotide sequence ID" value="NM_002185.3"/>
</dbReference>
<dbReference type="RefSeq" id="XP_047273106.1">
    <molecule id="P16871-3"/>
    <property type="nucleotide sequence ID" value="XM_047417150.1"/>
</dbReference>
<dbReference type="PDB" id="3DI2">
    <property type="method" value="X-ray"/>
    <property type="resolution" value="2.70 A"/>
    <property type="chains" value="B/D=21-239"/>
</dbReference>
<dbReference type="PDB" id="3DI3">
    <property type="method" value="X-ray"/>
    <property type="resolution" value="2.90 A"/>
    <property type="chains" value="B=21-239"/>
</dbReference>
<dbReference type="PDB" id="3UP1">
    <property type="method" value="X-ray"/>
    <property type="resolution" value="2.15 A"/>
    <property type="chains" value="A/B=21-239"/>
</dbReference>
<dbReference type="PDB" id="5J11">
    <property type="method" value="X-ray"/>
    <property type="resolution" value="2.56 A"/>
    <property type="chains" value="B=21-236"/>
</dbReference>
<dbReference type="PDB" id="6P50">
    <property type="method" value="X-ray"/>
    <property type="resolution" value="2.90 A"/>
    <property type="chains" value="C=21-239"/>
</dbReference>
<dbReference type="PDB" id="6P67">
    <property type="method" value="X-ray"/>
    <property type="resolution" value="2.90 A"/>
    <property type="chains" value="G/I/J/K=21-239"/>
</dbReference>
<dbReference type="PDB" id="7OPB">
    <property type="method" value="X-ray"/>
    <property type="resolution" value="2.14 A"/>
    <property type="chains" value="A/B/C=36-231"/>
</dbReference>
<dbReference type="PDBsum" id="3DI2"/>
<dbReference type="PDBsum" id="3DI3"/>
<dbReference type="PDBsum" id="3UP1"/>
<dbReference type="PDBsum" id="5J11"/>
<dbReference type="PDBsum" id="6P50"/>
<dbReference type="PDBsum" id="6P67"/>
<dbReference type="PDBsum" id="7OPB"/>
<dbReference type="SASBDB" id="P16871"/>
<dbReference type="SMR" id="P16871"/>
<dbReference type="BioGRID" id="109789">
    <property type="interactions" value="130"/>
</dbReference>
<dbReference type="ComplexPortal" id="CPX-493">
    <molecule id="P16871-4"/>
    <property type="entry name" value="Interleukin-7 sIL7RA-IL2RG receptor-ligand potentiating complex"/>
</dbReference>
<dbReference type="ComplexPortal" id="CPX-9102">
    <molecule id="P16871-1"/>
    <property type="entry name" value="Interleukin-7 mIL7R-IL2RG receptor-ligand signalling complex"/>
</dbReference>
<dbReference type="CORUM" id="P16871"/>
<dbReference type="DIP" id="DIP-3045N"/>
<dbReference type="ELM" id="P16871"/>
<dbReference type="FunCoup" id="P16871">
    <property type="interactions" value="1085"/>
</dbReference>
<dbReference type="IntAct" id="P16871">
    <property type="interactions" value="41"/>
</dbReference>
<dbReference type="MINT" id="P16871"/>
<dbReference type="STRING" id="9606.ENSP00000306157"/>
<dbReference type="GuidetoPHARMACOLOGY" id="1698"/>
<dbReference type="TCDB" id="8.A.152.1.11">
    <property type="family name" value="the interleukin receptor (ilr) family"/>
</dbReference>
<dbReference type="GlyCosmos" id="P16871">
    <property type="glycosylation" value="6 sites, No reported glycans"/>
</dbReference>
<dbReference type="GlyGen" id="P16871">
    <property type="glycosylation" value="6 sites, 1 N-linked glycan (1 site)"/>
</dbReference>
<dbReference type="iPTMnet" id="P16871"/>
<dbReference type="PhosphoSitePlus" id="P16871"/>
<dbReference type="BioMuta" id="IL7R"/>
<dbReference type="DMDM" id="215274000"/>
<dbReference type="MassIVE" id="P16871"/>
<dbReference type="PaxDb" id="9606-ENSP00000306157"/>
<dbReference type="PeptideAtlas" id="P16871"/>
<dbReference type="ProteomicsDB" id="53396">
    <molecule id="P16871-1"/>
</dbReference>
<dbReference type="ProteomicsDB" id="53397">
    <molecule id="P16871-2"/>
</dbReference>
<dbReference type="ProteomicsDB" id="53398">
    <molecule id="P16871-3"/>
</dbReference>
<dbReference type="ProteomicsDB" id="53399">
    <molecule id="P16871-4"/>
</dbReference>
<dbReference type="ABCD" id="P16871">
    <property type="antibodies" value="4 sequenced antibodies"/>
</dbReference>
<dbReference type="Antibodypedia" id="4129">
    <property type="antibodies" value="1480 antibodies from 49 providers"/>
</dbReference>
<dbReference type="DNASU" id="3575"/>
<dbReference type="Ensembl" id="ENST00000303115.8">
    <molecule id="P16871-1"/>
    <property type="protein sequence ID" value="ENSP00000306157.3"/>
    <property type="gene ID" value="ENSG00000168685.15"/>
</dbReference>
<dbReference type="Ensembl" id="ENST00000506850.5">
    <molecule id="P16871-3"/>
    <property type="protein sequence ID" value="ENSP00000421207.1"/>
    <property type="gene ID" value="ENSG00000168685.15"/>
</dbReference>
<dbReference type="GeneID" id="3575"/>
<dbReference type="KEGG" id="hsa:3575"/>
<dbReference type="MANE-Select" id="ENST00000303115.8">
    <property type="protein sequence ID" value="ENSP00000306157.3"/>
    <property type="RefSeq nucleotide sequence ID" value="NM_002185.5"/>
    <property type="RefSeq protein sequence ID" value="NP_002176.2"/>
</dbReference>
<dbReference type="UCSC" id="uc003jjs.5">
    <molecule id="P16871-1"/>
    <property type="organism name" value="human"/>
</dbReference>
<dbReference type="AGR" id="HGNC:6024"/>
<dbReference type="CTD" id="3575"/>
<dbReference type="DisGeNET" id="3575"/>
<dbReference type="GeneCards" id="IL7R"/>
<dbReference type="HGNC" id="HGNC:6024">
    <property type="gene designation" value="IL7R"/>
</dbReference>
<dbReference type="HPA" id="ENSG00000168685">
    <property type="expression patterns" value="Tissue enhanced (lymphoid)"/>
</dbReference>
<dbReference type="MalaCards" id="IL7R"/>
<dbReference type="MIM" id="146661">
    <property type="type" value="gene"/>
</dbReference>
<dbReference type="MIM" id="608971">
    <property type="type" value="phenotype"/>
</dbReference>
<dbReference type="MIM" id="612595">
    <property type="type" value="phenotype"/>
</dbReference>
<dbReference type="neXtProt" id="NX_P16871"/>
<dbReference type="OpenTargets" id="ENSG00000168685"/>
<dbReference type="Orphanet" id="39041">
    <property type="disease" value="Omenn syndrome"/>
</dbReference>
<dbReference type="Orphanet" id="169154">
    <property type="disease" value="T-B+ severe combined immunodeficiency due to IL-7Ralpha deficiency"/>
</dbReference>
<dbReference type="PharmGKB" id="PA29840"/>
<dbReference type="VEuPathDB" id="HostDB:ENSG00000168685"/>
<dbReference type="eggNOG" id="ENOG502S4WE">
    <property type="taxonomic scope" value="Eukaryota"/>
</dbReference>
<dbReference type="GeneTree" id="ENSGT00510000048500"/>
<dbReference type="HOGENOM" id="CLU_045398_0_0_1"/>
<dbReference type="InParanoid" id="P16871"/>
<dbReference type="OMA" id="QIHRVDD"/>
<dbReference type="OrthoDB" id="8611929at2759"/>
<dbReference type="PAN-GO" id="P16871">
    <property type="GO annotations" value="5 GO annotations based on evolutionary models"/>
</dbReference>
<dbReference type="PhylomeDB" id="P16871"/>
<dbReference type="TreeFam" id="TF336573"/>
<dbReference type="PathwayCommons" id="P16871"/>
<dbReference type="Reactome" id="R-HSA-1266695">
    <property type="pathway name" value="Interleukin-7 signaling"/>
</dbReference>
<dbReference type="Reactome" id="R-HSA-8856825">
    <property type="pathway name" value="Cargo recognition for clathrin-mediated endocytosis"/>
</dbReference>
<dbReference type="Reactome" id="R-HSA-8856828">
    <property type="pathway name" value="Clathrin-mediated endocytosis"/>
</dbReference>
<dbReference type="SignaLink" id="P16871"/>
<dbReference type="SIGNOR" id="P16871"/>
<dbReference type="BioGRID-ORCS" id="3575">
    <property type="hits" value="7 hits in 1160 CRISPR screens"/>
</dbReference>
<dbReference type="ChiTaRS" id="IL7R">
    <property type="organism name" value="human"/>
</dbReference>
<dbReference type="EvolutionaryTrace" id="P16871"/>
<dbReference type="GeneWiki" id="Interleukin-7_receptor-%CE%B1"/>
<dbReference type="GenomeRNAi" id="3575"/>
<dbReference type="Pharos" id="P16871">
    <property type="development level" value="Tbio"/>
</dbReference>
<dbReference type="PRO" id="PR:P16871"/>
<dbReference type="Proteomes" id="UP000005640">
    <property type="component" value="Chromosome 5"/>
</dbReference>
<dbReference type="RNAct" id="P16871">
    <property type="molecule type" value="protein"/>
</dbReference>
<dbReference type="Bgee" id="ENSG00000168685">
    <property type="expression patterns" value="Expressed in right lung and 148 other cell types or tissues"/>
</dbReference>
<dbReference type="ExpressionAtlas" id="P16871">
    <property type="expression patterns" value="baseline and differential"/>
</dbReference>
<dbReference type="GO" id="GO:0030669">
    <property type="term" value="C:clathrin-coated endocytic vesicle membrane"/>
    <property type="evidence" value="ECO:0000304"/>
    <property type="project" value="Reactome"/>
</dbReference>
<dbReference type="GO" id="GO:0005829">
    <property type="term" value="C:cytosol"/>
    <property type="evidence" value="ECO:0000314"/>
    <property type="project" value="HPA"/>
</dbReference>
<dbReference type="GO" id="GO:0009897">
    <property type="term" value="C:external side of plasma membrane"/>
    <property type="evidence" value="ECO:0000318"/>
    <property type="project" value="GO_Central"/>
</dbReference>
<dbReference type="GO" id="GO:0005576">
    <property type="term" value="C:extracellular region"/>
    <property type="evidence" value="ECO:0007669"/>
    <property type="project" value="UniProtKB-SubCell"/>
</dbReference>
<dbReference type="GO" id="GO:0005654">
    <property type="term" value="C:nucleoplasm"/>
    <property type="evidence" value="ECO:0000314"/>
    <property type="project" value="HPA"/>
</dbReference>
<dbReference type="GO" id="GO:0005886">
    <property type="term" value="C:plasma membrane"/>
    <property type="evidence" value="ECO:0000314"/>
    <property type="project" value="HPA"/>
</dbReference>
<dbReference type="GO" id="GO:0003823">
    <property type="term" value="F:antigen binding"/>
    <property type="evidence" value="ECO:0000304"/>
    <property type="project" value="ProtInc"/>
</dbReference>
<dbReference type="GO" id="GO:0004896">
    <property type="term" value="F:cytokine receptor activity"/>
    <property type="evidence" value="ECO:0000314"/>
    <property type="project" value="UniProtKB"/>
</dbReference>
<dbReference type="GO" id="GO:0004917">
    <property type="term" value="F:interleukin-7 receptor activity"/>
    <property type="evidence" value="ECO:0000314"/>
    <property type="project" value="UniProt"/>
</dbReference>
<dbReference type="GO" id="GO:0001782">
    <property type="term" value="P:B cell homeostasis"/>
    <property type="evidence" value="ECO:0007669"/>
    <property type="project" value="Ensembl"/>
</dbReference>
<dbReference type="GO" id="GO:0042100">
    <property type="term" value="P:B cell proliferation"/>
    <property type="evidence" value="ECO:0007669"/>
    <property type="project" value="Ensembl"/>
</dbReference>
<dbReference type="GO" id="GO:0000902">
    <property type="term" value="P:cell morphogenesis"/>
    <property type="evidence" value="ECO:0007669"/>
    <property type="project" value="Ensembl"/>
</dbReference>
<dbReference type="GO" id="GO:0007166">
    <property type="term" value="P:cell surface receptor signaling pathway"/>
    <property type="evidence" value="ECO:0000304"/>
    <property type="project" value="ProtInc"/>
</dbReference>
<dbReference type="GO" id="GO:0019725">
    <property type="term" value="P:cellular homeostasis"/>
    <property type="evidence" value="ECO:0000314"/>
    <property type="project" value="UniProt"/>
</dbReference>
<dbReference type="GO" id="GO:0019221">
    <property type="term" value="P:cytokine-mediated signaling pathway"/>
    <property type="evidence" value="ECO:0000318"/>
    <property type="project" value="GO_Central"/>
</dbReference>
<dbReference type="GO" id="GO:0050830">
    <property type="term" value="P:defense response to Gram-positive bacterium"/>
    <property type="evidence" value="ECO:0007669"/>
    <property type="project" value="Ensembl"/>
</dbReference>
<dbReference type="GO" id="GO:0010467">
    <property type="term" value="P:gene expression"/>
    <property type="evidence" value="ECO:0007669"/>
    <property type="project" value="Ensembl"/>
</dbReference>
<dbReference type="GO" id="GO:0030097">
    <property type="term" value="P:hemopoiesis"/>
    <property type="evidence" value="ECO:0000318"/>
    <property type="project" value="GO_Central"/>
</dbReference>
<dbReference type="GO" id="GO:0006955">
    <property type="term" value="P:immune response"/>
    <property type="evidence" value="ECO:0000304"/>
    <property type="project" value="ProtInc"/>
</dbReference>
<dbReference type="GO" id="GO:0038111">
    <property type="term" value="P:interleukin-7-mediated signaling pathway"/>
    <property type="evidence" value="ECO:0000314"/>
    <property type="project" value="UniProt"/>
</dbReference>
<dbReference type="GO" id="GO:0048535">
    <property type="term" value="P:lymph node development"/>
    <property type="evidence" value="ECO:0007669"/>
    <property type="project" value="Ensembl"/>
</dbReference>
<dbReference type="GO" id="GO:0070233">
    <property type="term" value="P:negative regulation of T cell apoptotic process"/>
    <property type="evidence" value="ECO:0007669"/>
    <property type="project" value="Ensembl"/>
</dbReference>
<dbReference type="GO" id="GO:0001915">
    <property type="term" value="P:negative regulation of T cell mediated cytotoxicity"/>
    <property type="evidence" value="ECO:0007669"/>
    <property type="project" value="Ensembl"/>
</dbReference>
<dbReference type="GO" id="GO:0008284">
    <property type="term" value="P:positive regulation of cell population proliferation"/>
    <property type="evidence" value="ECO:0000314"/>
    <property type="project" value="UniProtKB"/>
</dbReference>
<dbReference type="GO" id="GO:0010628">
    <property type="term" value="P:positive regulation of gene expression"/>
    <property type="evidence" value="ECO:0007669"/>
    <property type="project" value="Ensembl"/>
</dbReference>
<dbReference type="GO" id="GO:0046427">
    <property type="term" value="P:positive regulation of receptor signaling pathway via JAK-STAT"/>
    <property type="evidence" value="ECO:0000318"/>
    <property type="project" value="GO_Central"/>
</dbReference>
<dbReference type="GO" id="GO:1904894">
    <property type="term" value="P:positive regulation of receptor signaling pathway via STAT"/>
    <property type="evidence" value="ECO:0000314"/>
    <property type="project" value="UniProtKB"/>
</dbReference>
<dbReference type="GO" id="GO:0033089">
    <property type="term" value="P:positive regulation of T cell differentiation in thymus"/>
    <property type="evidence" value="ECO:0007669"/>
    <property type="project" value="Ensembl"/>
</dbReference>
<dbReference type="GO" id="GO:0008361">
    <property type="term" value="P:regulation of cell size"/>
    <property type="evidence" value="ECO:0007669"/>
    <property type="project" value="Ensembl"/>
</dbReference>
<dbReference type="GO" id="GO:0000018">
    <property type="term" value="P:regulation of DNA recombination"/>
    <property type="evidence" value="ECO:0000304"/>
    <property type="project" value="ProtInc"/>
</dbReference>
<dbReference type="GO" id="GO:0007165">
    <property type="term" value="P:signal transduction"/>
    <property type="evidence" value="ECO:0000304"/>
    <property type="project" value="ProtInc"/>
</dbReference>
<dbReference type="GO" id="GO:0033077">
    <property type="term" value="P:T cell differentiation in thymus"/>
    <property type="evidence" value="ECO:0007669"/>
    <property type="project" value="Ensembl"/>
</dbReference>
<dbReference type="GO" id="GO:0043029">
    <property type="term" value="P:T cell homeostasis"/>
    <property type="evidence" value="ECO:0007669"/>
    <property type="project" value="Ensembl"/>
</dbReference>
<dbReference type="GO" id="GO:0001913">
    <property type="term" value="P:T cell mediated cytotoxicity"/>
    <property type="evidence" value="ECO:0007669"/>
    <property type="project" value="Ensembl"/>
</dbReference>
<dbReference type="CDD" id="cd00063">
    <property type="entry name" value="FN3"/>
    <property type="match status" value="1"/>
</dbReference>
<dbReference type="FunFam" id="2.60.40.10:FF:001443">
    <property type="entry name" value="Interleukin-7 receptor subunit alpha"/>
    <property type="match status" value="1"/>
</dbReference>
<dbReference type="FunFam" id="2.60.40.1870:FF:000001">
    <property type="entry name" value="Interleukin-7 receptor subunit alpha"/>
    <property type="match status" value="1"/>
</dbReference>
<dbReference type="Gene3D" id="2.60.40.1870">
    <property type="match status" value="1"/>
</dbReference>
<dbReference type="Gene3D" id="2.60.40.10">
    <property type="entry name" value="Immunoglobulins"/>
    <property type="match status" value="1"/>
</dbReference>
<dbReference type="InterPro" id="IPR040997">
    <property type="entry name" value="FN3_7"/>
</dbReference>
<dbReference type="InterPro" id="IPR003961">
    <property type="entry name" value="FN3_dom"/>
</dbReference>
<dbReference type="InterPro" id="IPR036116">
    <property type="entry name" value="FN3_sf"/>
</dbReference>
<dbReference type="InterPro" id="IPR003531">
    <property type="entry name" value="Hempt_rcpt_S_F1_CS"/>
</dbReference>
<dbReference type="InterPro" id="IPR013783">
    <property type="entry name" value="Ig-like_fold"/>
</dbReference>
<dbReference type="PANTHER" id="PTHR23037">
    <property type="entry name" value="CYTOKINE RECEPTOR"/>
    <property type="match status" value="1"/>
</dbReference>
<dbReference type="PANTHER" id="PTHR23037:SF27">
    <property type="entry name" value="INTERLEUKIN-7 RECEPTOR SUBUNIT ALPHA"/>
    <property type="match status" value="1"/>
</dbReference>
<dbReference type="Pfam" id="PF00041">
    <property type="entry name" value="fn3"/>
    <property type="match status" value="1"/>
</dbReference>
<dbReference type="Pfam" id="PF18447">
    <property type="entry name" value="FN3_7"/>
    <property type="match status" value="1"/>
</dbReference>
<dbReference type="SUPFAM" id="SSF49265">
    <property type="entry name" value="Fibronectin type III"/>
    <property type="match status" value="1"/>
</dbReference>
<dbReference type="PROSITE" id="PS50853">
    <property type="entry name" value="FN3"/>
    <property type="match status" value="1"/>
</dbReference>
<dbReference type="PROSITE" id="PS01355">
    <property type="entry name" value="HEMATOPO_REC_S_F1"/>
    <property type="match status" value="1"/>
</dbReference>
<organism>
    <name type="scientific">Homo sapiens</name>
    <name type="common">Human</name>
    <dbReference type="NCBI Taxonomy" id="9606"/>
    <lineage>
        <taxon>Eukaryota</taxon>
        <taxon>Metazoa</taxon>
        <taxon>Chordata</taxon>
        <taxon>Craniata</taxon>
        <taxon>Vertebrata</taxon>
        <taxon>Euteleostomi</taxon>
        <taxon>Mammalia</taxon>
        <taxon>Eutheria</taxon>
        <taxon>Euarchontoglires</taxon>
        <taxon>Primates</taxon>
        <taxon>Haplorrhini</taxon>
        <taxon>Catarrhini</taxon>
        <taxon>Hominidae</taxon>
        <taxon>Homo</taxon>
    </lineage>
</organism>